<accession>Q4FNN3</accession>
<organism>
    <name type="scientific">Pelagibacter ubique (strain HTCC1062)</name>
    <dbReference type="NCBI Taxonomy" id="335992"/>
    <lineage>
        <taxon>Bacteria</taxon>
        <taxon>Pseudomonadati</taxon>
        <taxon>Pseudomonadota</taxon>
        <taxon>Alphaproteobacteria</taxon>
        <taxon>Candidatus Pelagibacterales</taxon>
        <taxon>Candidatus Pelagibacteraceae</taxon>
        <taxon>Candidatus Pelagibacter</taxon>
    </lineage>
</organism>
<protein>
    <recommendedName>
        <fullName evidence="1">Endoribonuclease YbeY</fullName>
        <ecNumber evidence="1">3.1.-.-</ecNumber>
    </recommendedName>
</protein>
<evidence type="ECO:0000255" key="1">
    <source>
        <dbReference type="HAMAP-Rule" id="MF_00009"/>
    </source>
</evidence>
<proteinExistence type="inferred from homology"/>
<feature type="chain" id="PRO_0000284264" description="Endoribonuclease YbeY">
    <location>
        <begin position="1"/>
        <end position="153"/>
    </location>
</feature>
<feature type="binding site" evidence="1">
    <location>
        <position position="118"/>
    </location>
    <ligand>
        <name>Zn(2+)</name>
        <dbReference type="ChEBI" id="CHEBI:29105"/>
        <note>catalytic</note>
    </ligand>
</feature>
<feature type="binding site" evidence="1">
    <location>
        <position position="122"/>
    </location>
    <ligand>
        <name>Zn(2+)</name>
        <dbReference type="ChEBI" id="CHEBI:29105"/>
        <note>catalytic</note>
    </ligand>
</feature>
<feature type="binding site" evidence="1">
    <location>
        <position position="128"/>
    </location>
    <ligand>
        <name>Zn(2+)</name>
        <dbReference type="ChEBI" id="CHEBI:29105"/>
        <note>catalytic</note>
    </ligand>
</feature>
<dbReference type="EC" id="3.1.-.-" evidence="1"/>
<dbReference type="EMBL" id="CP000084">
    <property type="protein sequence ID" value="AAZ21206.1"/>
    <property type="molecule type" value="Genomic_DNA"/>
</dbReference>
<dbReference type="RefSeq" id="WP_011281671.1">
    <property type="nucleotide sequence ID" value="NC_007205.1"/>
</dbReference>
<dbReference type="SMR" id="Q4FNN3"/>
<dbReference type="STRING" id="335992.SAR11_0385"/>
<dbReference type="GeneID" id="66294882"/>
<dbReference type="KEGG" id="pub:SAR11_0385"/>
<dbReference type="eggNOG" id="COG0319">
    <property type="taxonomic scope" value="Bacteria"/>
</dbReference>
<dbReference type="HOGENOM" id="CLU_106710_3_3_5"/>
<dbReference type="OrthoDB" id="9807740at2"/>
<dbReference type="Proteomes" id="UP000002528">
    <property type="component" value="Chromosome"/>
</dbReference>
<dbReference type="GO" id="GO:0005737">
    <property type="term" value="C:cytoplasm"/>
    <property type="evidence" value="ECO:0007669"/>
    <property type="project" value="UniProtKB-SubCell"/>
</dbReference>
<dbReference type="GO" id="GO:0004222">
    <property type="term" value="F:metalloendopeptidase activity"/>
    <property type="evidence" value="ECO:0007669"/>
    <property type="project" value="InterPro"/>
</dbReference>
<dbReference type="GO" id="GO:0004521">
    <property type="term" value="F:RNA endonuclease activity"/>
    <property type="evidence" value="ECO:0007669"/>
    <property type="project" value="UniProtKB-UniRule"/>
</dbReference>
<dbReference type="GO" id="GO:0008270">
    <property type="term" value="F:zinc ion binding"/>
    <property type="evidence" value="ECO:0007669"/>
    <property type="project" value="UniProtKB-UniRule"/>
</dbReference>
<dbReference type="GO" id="GO:0006364">
    <property type="term" value="P:rRNA processing"/>
    <property type="evidence" value="ECO:0007669"/>
    <property type="project" value="UniProtKB-UniRule"/>
</dbReference>
<dbReference type="Gene3D" id="3.40.390.30">
    <property type="entry name" value="Metalloproteases ('zincins'), catalytic domain"/>
    <property type="match status" value="1"/>
</dbReference>
<dbReference type="HAMAP" id="MF_00009">
    <property type="entry name" value="Endoribonucl_YbeY"/>
    <property type="match status" value="1"/>
</dbReference>
<dbReference type="InterPro" id="IPR023091">
    <property type="entry name" value="MetalPrtase_cat_dom_sf_prd"/>
</dbReference>
<dbReference type="InterPro" id="IPR002036">
    <property type="entry name" value="YbeY"/>
</dbReference>
<dbReference type="InterPro" id="IPR020549">
    <property type="entry name" value="YbeY_CS"/>
</dbReference>
<dbReference type="NCBIfam" id="TIGR00043">
    <property type="entry name" value="rRNA maturation RNase YbeY"/>
    <property type="match status" value="1"/>
</dbReference>
<dbReference type="PANTHER" id="PTHR46986">
    <property type="entry name" value="ENDORIBONUCLEASE YBEY, CHLOROPLASTIC"/>
    <property type="match status" value="1"/>
</dbReference>
<dbReference type="PANTHER" id="PTHR46986:SF1">
    <property type="entry name" value="ENDORIBONUCLEASE YBEY, CHLOROPLASTIC"/>
    <property type="match status" value="1"/>
</dbReference>
<dbReference type="Pfam" id="PF02130">
    <property type="entry name" value="YbeY"/>
    <property type="match status" value="1"/>
</dbReference>
<dbReference type="SUPFAM" id="SSF55486">
    <property type="entry name" value="Metalloproteases ('zincins'), catalytic domain"/>
    <property type="match status" value="1"/>
</dbReference>
<dbReference type="PROSITE" id="PS01306">
    <property type="entry name" value="UPF0054"/>
    <property type="match status" value="1"/>
</dbReference>
<gene>
    <name evidence="1" type="primary">ybeY</name>
    <name type="ordered locus">SAR11_0385</name>
</gene>
<comment type="function">
    <text evidence="1">Single strand-specific metallo-endoribonuclease involved in late-stage 70S ribosome quality control and in maturation of the 3' terminus of the 16S rRNA.</text>
</comment>
<comment type="cofactor">
    <cofactor evidence="1">
        <name>Zn(2+)</name>
        <dbReference type="ChEBI" id="CHEBI:29105"/>
    </cofactor>
    <text evidence="1">Binds 1 zinc ion.</text>
</comment>
<comment type="subcellular location">
    <subcellularLocation>
        <location evidence="1">Cytoplasm</location>
    </subcellularLocation>
</comment>
<comment type="similarity">
    <text evidence="1">Belongs to the endoribonuclease YbeY family.</text>
</comment>
<sequence>MIKIDVVSECTLWSKKIKRNKTFFNSILKFFPKKYKFIGKKINLTILLSNNKNIKKLNKDFRNKNKPTDVLSFPFEKKFNPKKSNYLGDIVISYEFMNKPKNISILEFKQKVVKIFIHGFLHLLGHDHIKLKDFKKMIKEEDLIYKFIKTKVA</sequence>
<keyword id="KW-0963">Cytoplasm</keyword>
<keyword id="KW-0255">Endonuclease</keyword>
<keyword id="KW-0378">Hydrolase</keyword>
<keyword id="KW-0479">Metal-binding</keyword>
<keyword id="KW-0540">Nuclease</keyword>
<keyword id="KW-1185">Reference proteome</keyword>
<keyword id="KW-0690">Ribosome biogenesis</keyword>
<keyword id="KW-0698">rRNA processing</keyword>
<keyword id="KW-0862">Zinc</keyword>
<reference key="1">
    <citation type="journal article" date="2005" name="Science">
        <title>Genome streamlining in a cosmopolitan oceanic bacterium.</title>
        <authorList>
            <person name="Giovannoni S.J."/>
            <person name="Tripp H.J."/>
            <person name="Givan S."/>
            <person name="Podar M."/>
            <person name="Vergin K.L."/>
            <person name="Baptista D."/>
            <person name="Bibbs L."/>
            <person name="Eads J."/>
            <person name="Richardson T.H."/>
            <person name="Noordewier M."/>
            <person name="Rappe M.S."/>
            <person name="Short J.M."/>
            <person name="Carrington J.C."/>
            <person name="Mathur E.J."/>
        </authorList>
    </citation>
    <scope>NUCLEOTIDE SEQUENCE [LARGE SCALE GENOMIC DNA]</scope>
    <source>
        <strain>HTCC1062</strain>
    </source>
</reference>
<name>YBEY_PELUB</name>